<feature type="chain" id="PRO_0000089313" description="Protein CapJ">
    <location>
        <begin position="1"/>
        <end position="391"/>
    </location>
</feature>
<name>CAPJ_STAAU</name>
<sequence>MQLLFVHDFPVEKYKDNYYSIGFSHKIWNRYLTIFDKMLINSRVKNVDNGEIINKSNGEKVNFKTIDSYKSPKSLIFKHKKIFEALTISIKKSDGVLIRVPSVLGFIAALICKKINKPYMVEVVGAAFDAYWFHGSIFGKILSLPMEYLQKNAVKNASIAIYVTKKYLSNKYPCNGKEFKGISNVQSVEKFNKNLDIGNKIKIGLIGSTFVDYKGHNVAIKSISNLVNEGYNIELEFVGDGPSKKFMEMAKKYNVENNVIFKGKIYDKTALNNWFRNLDLYIQPSLTEGHCRAIVEAIGNGVPTLASNAGGNSDSVNKEYLFKPKDVVKLTKLINRSILSKQYREENVLENKKNISGYNLENIQIEREKALLNYKKIINDFYLAKGINKNA</sequence>
<organism>
    <name type="scientific">Staphylococcus aureus</name>
    <dbReference type="NCBI Taxonomy" id="1280"/>
    <lineage>
        <taxon>Bacteria</taxon>
        <taxon>Bacillati</taxon>
        <taxon>Bacillota</taxon>
        <taxon>Bacilli</taxon>
        <taxon>Bacillales</taxon>
        <taxon>Staphylococcaceae</taxon>
        <taxon>Staphylococcus</taxon>
    </lineage>
</organism>
<reference key="1">
    <citation type="journal article" date="1994" name="J. Bacteriol.">
        <title>Sequence analysis and molecular characterization of genes required for the biosynthesis of type 1 capsular polysaccharide in Staphylococcus aureus.</title>
        <authorList>
            <person name="Lin W.S."/>
            <person name="Cunneen T."/>
            <person name="Lee C.Y."/>
        </authorList>
    </citation>
    <scope>NUCLEOTIDE SEQUENCE [GENOMIC DNA]</scope>
    <source>
        <strain>ATCC 49951 / M / NCTC 10649</strain>
    </source>
</reference>
<accession>P39859</accession>
<comment type="function">
    <text>Required for the biosynthesis of type 1 capsular polysaccharide.</text>
</comment>
<comment type="pathway">
    <text>Capsule biogenesis; capsule polysaccharide biosynthesis.</text>
</comment>
<keyword id="KW-0972">Capsule biogenesis/degradation</keyword>
<keyword id="KW-0270">Exopolysaccharide synthesis</keyword>
<proteinExistence type="predicted"/>
<protein>
    <recommendedName>
        <fullName>Protein CapJ</fullName>
    </recommendedName>
</protein>
<dbReference type="EMBL" id="U10927">
    <property type="protein sequence ID" value="AAA64649.1"/>
    <property type="molecule type" value="Genomic_DNA"/>
</dbReference>
<dbReference type="RefSeq" id="WP_115294914.1">
    <property type="nucleotide sequence ID" value="NZ_UGZL01000001.1"/>
</dbReference>
<dbReference type="SMR" id="P39859"/>
<dbReference type="CAZy" id="GT4">
    <property type="family name" value="Glycosyltransferase Family 4"/>
</dbReference>
<dbReference type="UniPathway" id="UPA00934"/>
<dbReference type="GO" id="GO:0016757">
    <property type="term" value="F:glycosyltransferase activity"/>
    <property type="evidence" value="ECO:0007669"/>
    <property type="project" value="InterPro"/>
</dbReference>
<dbReference type="GO" id="GO:0045227">
    <property type="term" value="P:capsule polysaccharide biosynthetic process"/>
    <property type="evidence" value="ECO:0007669"/>
    <property type="project" value="UniProtKB-UniPathway"/>
</dbReference>
<dbReference type="CDD" id="cd03801">
    <property type="entry name" value="GT4_PimA-like"/>
    <property type="match status" value="1"/>
</dbReference>
<dbReference type="Gene3D" id="3.40.50.2000">
    <property type="entry name" value="Glycogen Phosphorylase B"/>
    <property type="match status" value="2"/>
</dbReference>
<dbReference type="InterPro" id="IPR001296">
    <property type="entry name" value="Glyco_trans_1"/>
</dbReference>
<dbReference type="InterPro" id="IPR050194">
    <property type="entry name" value="Glycosyltransferase_grp1"/>
</dbReference>
<dbReference type="PANTHER" id="PTHR45947">
    <property type="entry name" value="SULFOQUINOVOSYL TRANSFERASE SQD2"/>
    <property type="match status" value="1"/>
</dbReference>
<dbReference type="PANTHER" id="PTHR45947:SF3">
    <property type="entry name" value="SULFOQUINOVOSYL TRANSFERASE SQD2"/>
    <property type="match status" value="1"/>
</dbReference>
<dbReference type="Pfam" id="PF00534">
    <property type="entry name" value="Glycos_transf_1"/>
    <property type="match status" value="1"/>
</dbReference>
<dbReference type="SUPFAM" id="SSF53756">
    <property type="entry name" value="UDP-Glycosyltransferase/glycogen phosphorylase"/>
    <property type="match status" value="1"/>
</dbReference>
<gene>
    <name type="primary">capJ</name>
</gene>